<reference key="1">
    <citation type="submission" date="2008-06" db="EMBL/GenBank/DDBJ databases">
        <title>Complete sequence of Chlorobaculum parvum NCIB 8327.</title>
        <authorList>
            <consortium name="US DOE Joint Genome Institute"/>
            <person name="Lucas S."/>
            <person name="Copeland A."/>
            <person name="Lapidus A."/>
            <person name="Glavina del Rio T."/>
            <person name="Dalin E."/>
            <person name="Tice H."/>
            <person name="Bruce D."/>
            <person name="Goodwin L."/>
            <person name="Pitluck S."/>
            <person name="Schmutz J."/>
            <person name="Larimer F."/>
            <person name="Land M."/>
            <person name="Hauser L."/>
            <person name="Kyrpides N."/>
            <person name="Mikhailova N."/>
            <person name="Zhao F."/>
            <person name="Li T."/>
            <person name="Liu Z."/>
            <person name="Overmann J."/>
            <person name="Bryant D.A."/>
            <person name="Richardson P."/>
        </authorList>
    </citation>
    <scope>NUCLEOTIDE SEQUENCE [LARGE SCALE GENOMIC DNA]</scope>
    <source>
        <strain>DSM 263 / NCIMB 8327</strain>
    </source>
</reference>
<gene>
    <name evidence="1" type="primary">aat</name>
    <name type="ordered locus">Cpar_1689</name>
</gene>
<sequence>MIKVEDILRAYRHGFFPMADSREGTVSWCQPYQRAVVPLDTFRPSRSLRRVIDEGQFTIKTNTAFEKVIRACALPRAVEKETWISEEIIEVFLKLHRLGLAHSVESWQNGELAGGLYGLSMGGAFFGESMFFFERDASKVAFAWLVGYLRKKGFSLLDAQIMNPHLESLGAIEIPHEEYMLRLEHALAKKIFFI</sequence>
<organism>
    <name type="scientific">Chlorobaculum parvum (strain DSM 263 / NCIMB 8327)</name>
    <name type="common">Chlorobium vibrioforme subsp. thiosulfatophilum</name>
    <dbReference type="NCBI Taxonomy" id="517417"/>
    <lineage>
        <taxon>Bacteria</taxon>
        <taxon>Pseudomonadati</taxon>
        <taxon>Chlorobiota</taxon>
        <taxon>Chlorobiia</taxon>
        <taxon>Chlorobiales</taxon>
        <taxon>Chlorobiaceae</taxon>
        <taxon>Chlorobaculum</taxon>
    </lineage>
</organism>
<protein>
    <recommendedName>
        <fullName evidence="1">Leucyl/phenylalanyl-tRNA--protein transferase</fullName>
        <ecNumber evidence="1">2.3.2.6</ecNumber>
    </recommendedName>
    <alternativeName>
        <fullName evidence="1">L/F-transferase</fullName>
    </alternativeName>
    <alternativeName>
        <fullName evidence="1">Leucyltransferase</fullName>
    </alternativeName>
    <alternativeName>
        <fullName evidence="1">Phenyalanyltransferase</fullName>
    </alternativeName>
</protein>
<name>LFTR_CHLP8</name>
<comment type="function">
    <text evidence="1">Functions in the N-end rule pathway of protein degradation where it conjugates Leu, Phe and, less efficiently, Met from aminoacyl-tRNAs to the N-termini of proteins containing an N-terminal arginine or lysine.</text>
</comment>
<comment type="catalytic activity">
    <reaction evidence="1">
        <text>N-terminal L-lysyl-[protein] + L-leucyl-tRNA(Leu) = N-terminal L-leucyl-L-lysyl-[protein] + tRNA(Leu) + H(+)</text>
        <dbReference type="Rhea" id="RHEA:12340"/>
        <dbReference type="Rhea" id="RHEA-COMP:9613"/>
        <dbReference type="Rhea" id="RHEA-COMP:9622"/>
        <dbReference type="Rhea" id="RHEA-COMP:12670"/>
        <dbReference type="Rhea" id="RHEA-COMP:12671"/>
        <dbReference type="ChEBI" id="CHEBI:15378"/>
        <dbReference type="ChEBI" id="CHEBI:65249"/>
        <dbReference type="ChEBI" id="CHEBI:78442"/>
        <dbReference type="ChEBI" id="CHEBI:78494"/>
        <dbReference type="ChEBI" id="CHEBI:133043"/>
        <dbReference type="EC" id="2.3.2.6"/>
    </reaction>
</comment>
<comment type="catalytic activity">
    <reaction evidence="1">
        <text>N-terminal L-arginyl-[protein] + L-leucyl-tRNA(Leu) = N-terminal L-leucyl-L-arginyl-[protein] + tRNA(Leu) + H(+)</text>
        <dbReference type="Rhea" id="RHEA:50416"/>
        <dbReference type="Rhea" id="RHEA-COMP:9613"/>
        <dbReference type="Rhea" id="RHEA-COMP:9622"/>
        <dbReference type="Rhea" id="RHEA-COMP:12672"/>
        <dbReference type="Rhea" id="RHEA-COMP:12673"/>
        <dbReference type="ChEBI" id="CHEBI:15378"/>
        <dbReference type="ChEBI" id="CHEBI:64719"/>
        <dbReference type="ChEBI" id="CHEBI:78442"/>
        <dbReference type="ChEBI" id="CHEBI:78494"/>
        <dbReference type="ChEBI" id="CHEBI:133044"/>
        <dbReference type="EC" id="2.3.2.6"/>
    </reaction>
</comment>
<comment type="catalytic activity">
    <reaction evidence="1">
        <text>L-phenylalanyl-tRNA(Phe) + an N-terminal L-alpha-aminoacyl-[protein] = an N-terminal L-phenylalanyl-L-alpha-aminoacyl-[protein] + tRNA(Phe)</text>
        <dbReference type="Rhea" id="RHEA:43632"/>
        <dbReference type="Rhea" id="RHEA-COMP:9668"/>
        <dbReference type="Rhea" id="RHEA-COMP:9699"/>
        <dbReference type="Rhea" id="RHEA-COMP:10636"/>
        <dbReference type="Rhea" id="RHEA-COMP:10637"/>
        <dbReference type="ChEBI" id="CHEBI:78442"/>
        <dbReference type="ChEBI" id="CHEBI:78531"/>
        <dbReference type="ChEBI" id="CHEBI:78597"/>
        <dbReference type="ChEBI" id="CHEBI:83561"/>
        <dbReference type="EC" id="2.3.2.6"/>
    </reaction>
</comment>
<comment type="subcellular location">
    <subcellularLocation>
        <location evidence="1">Cytoplasm</location>
    </subcellularLocation>
</comment>
<comment type="similarity">
    <text evidence="1">Belongs to the L/F-transferase family.</text>
</comment>
<feature type="chain" id="PRO_1000131914" description="Leucyl/phenylalanyl-tRNA--protein transferase">
    <location>
        <begin position="1"/>
        <end position="194"/>
    </location>
</feature>
<evidence type="ECO:0000255" key="1">
    <source>
        <dbReference type="HAMAP-Rule" id="MF_00688"/>
    </source>
</evidence>
<proteinExistence type="inferred from homology"/>
<dbReference type="EC" id="2.3.2.6" evidence="1"/>
<dbReference type="EMBL" id="CP001099">
    <property type="protein sequence ID" value="ACF12083.1"/>
    <property type="molecule type" value="Genomic_DNA"/>
</dbReference>
<dbReference type="RefSeq" id="WP_012502916.1">
    <property type="nucleotide sequence ID" value="NC_011027.1"/>
</dbReference>
<dbReference type="SMR" id="B3QQ80"/>
<dbReference type="STRING" id="517417.Cpar_1689"/>
<dbReference type="KEGG" id="cpc:Cpar_1689"/>
<dbReference type="eggNOG" id="COG2360">
    <property type="taxonomic scope" value="Bacteria"/>
</dbReference>
<dbReference type="HOGENOM" id="CLU_075045_1_1_10"/>
<dbReference type="OrthoDB" id="9790282at2"/>
<dbReference type="Proteomes" id="UP000008811">
    <property type="component" value="Chromosome"/>
</dbReference>
<dbReference type="GO" id="GO:0005737">
    <property type="term" value="C:cytoplasm"/>
    <property type="evidence" value="ECO:0007669"/>
    <property type="project" value="UniProtKB-SubCell"/>
</dbReference>
<dbReference type="GO" id="GO:0008914">
    <property type="term" value="F:leucyl-tRNA--protein transferase activity"/>
    <property type="evidence" value="ECO:0007669"/>
    <property type="project" value="UniProtKB-UniRule"/>
</dbReference>
<dbReference type="GO" id="GO:0030163">
    <property type="term" value="P:protein catabolic process"/>
    <property type="evidence" value="ECO:0007669"/>
    <property type="project" value="UniProtKB-UniRule"/>
</dbReference>
<dbReference type="FunFam" id="3.40.630.70:FF:000001">
    <property type="entry name" value="Leucyl/phenylalanyl-tRNA--protein transferase"/>
    <property type="match status" value="1"/>
</dbReference>
<dbReference type="Gene3D" id="3.40.630.70">
    <property type="entry name" value="Leucyl/phenylalanyl-tRNA-protein transferase, C-terminal domain"/>
    <property type="match status" value="1"/>
</dbReference>
<dbReference type="HAMAP" id="MF_00688">
    <property type="entry name" value="Leu_Phe_trans"/>
    <property type="match status" value="1"/>
</dbReference>
<dbReference type="InterPro" id="IPR016181">
    <property type="entry name" value="Acyl_CoA_acyltransferase"/>
</dbReference>
<dbReference type="InterPro" id="IPR004616">
    <property type="entry name" value="Leu/Phe-tRNA_Trfase"/>
</dbReference>
<dbReference type="InterPro" id="IPR042203">
    <property type="entry name" value="Leu/Phe-tRNA_Trfase_C"/>
</dbReference>
<dbReference type="NCBIfam" id="TIGR00667">
    <property type="entry name" value="aat"/>
    <property type="match status" value="1"/>
</dbReference>
<dbReference type="PANTHER" id="PTHR30098">
    <property type="entry name" value="LEUCYL/PHENYLALANYL-TRNA--PROTEIN TRANSFERASE"/>
    <property type="match status" value="1"/>
</dbReference>
<dbReference type="PANTHER" id="PTHR30098:SF2">
    <property type="entry name" value="LEUCYL_PHENYLALANYL-TRNA--PROTEIN TRANSFERASE"/>
    <property type="match status" value="1"/>
</dbReference>
<dbReference type="Pfam" id="PF03588">
    <property type="entry name" value="Leu_Phe_trans"/>
    <property type="match status" value="1"/>
</dbReference>
<dbReference type="SUPFAM" id="SSF55729">
    <property type="entry name" value="Acyl-CoA N-acyltransferases (Nat)"/>
    <property type="match status" value="1"/>
</dbReference>
<keyword id="KW-0012">Acyltransferase</keyword>
<keyword id="KW-0963">Cytoplasm</keyword>
<keyword id="KW-0808">Transferase</keyword>
<accession>B3QQ80</accession>